<organism>
    <name type="scientific">Homo sapiens</name>
    <name type="common">Human</name>
    <dbReference type="NCBI Taxonomy" id="9606"/>
    <lineage>
        <taxon>Eukaryota</taxon>
        <taxon>Metazoa</taxon>
        <taxon>Chordata</taxon>
        <taxon>Craniata</taxon>
        <taxon>Vertebrata</taxon>
        <taxon>Euteleostomi</taxon>
        <taxon>Mammalia</taxon>
        <taxon>Eutheria</taxon>
        <taxon>Euarchontoglires</taxon>
        <taxon>Primates</taxon>
        <taxon>Haplorrhini</taxon>
        <taxon>Catarrhini</taxon>
        <taxon>Hominidae</taxon>
        <taxon>Homo</taxon>
    </lineage>
</organism>
<proteinExistence type="evidence at protein level"/>
<reference key="1">
    <citation type="journal article" date="2003" name="Biochem. Biophys. Res. Commun.">
        <title>Characterization of KIBRA, a novel WW domain-containing protein.</title>
        <authorList>
            <person name="Kremerskothen J."/>
            <person name="Plaas C."/>
            <person name="Buether K."/>
            <person name="Finger I."/>
            <person name="Veltel S."/>
            <person name="Matanis T."/>
            <person name="Liedtke T."/>
            <person name="Barnekow A."/>
        </authorList>
    </citation>
    <scope>NUCLEOTIDE SEQUENCE [MRNA] (ISOFORM 1)</scope>
    <scope>INTERACTION WITH DDN</scope>
    <scope>SUBCELLULAR LOCATION</scope>
    <scope>TISSUE SPECIFICITY</scope>
    <source>
        <tissue>Brain</tissue>
    </source>
</reference>
<reference key="2">
    <citation type="journal article" date="2004" name="Nat. Genet.">
        <title>Complete sequencing and characterization of 21,243 full-length human cDNAs.</title>
        <authorList>
            <person name="Ota T."/>
            <person name="Suzuki Y."/>
            <person name="Nishikawa T."/>
            <person name="Otsuki T."/>
            <person name="Sugiyama T."/>
            <person name="Irie R."/>
            <person name="Wakamatsu A."/>
            <person name="Hayashi K."/>
            <person name="Sato H."/>
            <person name="Nagai K."/>
            <person name="Kimura K."/>
            <person name="Makita H."/>
            <person name="Sekine M."/>
            <person name="Obayashi M."/>
            <person name="Nishi T."/>
            <person name="Shibahara T."/>
            <person name="Tanaka T."/>
            <person name="Ishii S."/>
            <person name="Yamamoto J."/>
            <person name="Saito K."/>
            <person name="Kawai Y."/>
            <person name="Isono Y."/>
            <person name="Nakamura Y."/>
            <person name="Nagahari K."/>
            <person name="Murakami K."/>
            <person name="Yasuda T."/>
            <person name="Iwayanagi T."/>
            <person name="Wagatsuma M."/>
            <person name="Shiratori A."/>
            <person name="Sudo H."/>
            <person name="Hosoiri T."/>
            <person name="Kaku Y."/>
            <person name="Kodaira H."/>
            <person name="Kondo H."/>
            <person name="Sugawara M."/>
            <person name="Takahashi M."/>
            <person name="Kanda K."/>
            <person name="Yokoi T."/>
            <person name="Furuya T."/>
            <person name="Kikkawa E."/>
            <person name="Omura Y."/>
            <person name="Abe K."/>
            <person name="Kamihara K."/>
            <person name="Katsuta N."/>
            <person name="Sato K."/>
            <person name="Tanikawa M."/>
            <person name="Yamazaki M."/>
            <person name="Ninomiya K."/>
            <person name="Ishibashi T."/>
            <person name="Yamashita H."/>
            <person name="Murakawa K."/>
            <person name="Fujimori K."/>
            <person name="Tanai H."/>
            <person name="Kimata M."/>
            <person name="Watanabe M."/>
            <person name="Hiraoka S."/>
            <person name="Chiba Y."/>
            <person name="Ishida S."/>
            <person name="Ono Y."/>
            <person name="Takiguchi S."/>
            <person name="Watanabe S."/>
            <person name="Yosida M."/>
            <person name="Hotuta T."/>
            <person name="Kusano J."/>
            <person name="Kanehori K."/>
            <person name="Takahashi-Fujii A."/>
            <person name="Hara H."/>
            <person name="Tanase T.-O."/>
            <person name="Nomura Y."/>
            <person name="Togiya S."/>
            <person name="Komai F."/>
            <person name="Hara R."/>
            <person name="Takeuchi K."/>
            <person name="Arita M."/>
            <person name="Imose N."/>
            <person name="Musashino K."/>
            <person name="Yuuki H."/>
            <person name="Oshima A."/>
            <person name="Sasaki N."/>
            <person name="Aotsuka S."/>
            <person name="Yoshikawa Y."/>
            <person name="Matsunawa H."/>
            <person name="Ichihara T."/>
            <person name="Shiohata N."/>
            <person name="Sano S."/>
            <person name="Moriya S."/>
            <person name="Momiyama H."/>
            <person name="Satoh N."/>
            <person name="Takami S."/>
            <person name="Terashima Y."/>
            <person name="Suzuki O."/>
            <person name="Nakagawa S."/>
            <person name="Senoh A."/>
            <person name="Mizoguchi H."/>
            <person name="Goto Y."/>
            <person name="Shimizu F."/>
            <person name="Wakebe H."/>
            <person name="Hishigaki H."/>
            <person name="Watanabe T."/>
            <person name="Sugiyama A."/>
            <person name="Takemoto M."/>
            <person name="Kawakami B."/>
            <person name="Yamazaki M."/>
            <person name="Watanabe K."/>
            <person name="Kumagai A."/>
            <person name="Itakura S."/>
            <person name="Fukuzumi Y."/>
            <person name="Fujimori Y."/>
            <person name="Komiyama M."/>
            <person name="Tashiro H."/>
            <person name="Tanigami A."/>
            <person name="Fujiwara T."/>
            <person name="Ono T."/>
            <person name="Yamada K."/>
            <person name="Fujii Y."/>
            <person name="Ozaki K."/>
            <person name="Hirao M."/>
            <person name="Ohmori Y."/>
            <person name="Kawabata A."/>
            <person name="Hikiji T."/>
            <person name="Kobatake N."/>
            <person name="Inagaki H."/>
            <person name="Ikema Y."/>
            <person name="Okamoto S."/>
            <person name="Okitani R."/>
            <person name="Kawakami T."/>
            <person name="Noguchi S."/>
            <person name="Itoh T."/>
            <person name="Shigeta K."/>
            <person name="Senba T."/>
            <person name="Matsumura K."/>
            <person name="Nakajima Y."/>
            <person name="Mizuno T."/>
            <person name="Morinaga M."/>
            <person name="Sasaki M."/>
            <person name="Togashi T."/>
            <person name="Oyama M."/>
            <person name="Hata H."/>
            <person name="Watanabe M."/>
            <person name="Komatsu T."/>
            <person name="Mizushima-Sugano J."/>
            <person name="Satoh T."/>
            <person name="Shirai Y."/>
            <person name="Takahashi Y."/>
            <person name="Nakagawa K."/>
            <person name="Okumura K."/>
            <person name="Nagase T."/>
            <person name="Nomura N."/>
            <person name="Kikuchi H."/>
            <person name="Masuho Y."/>
            <person name="Yamashita R."/>
            <person name="Nakai K."/>
            <person name="Yada T."/>
            <person name="Nakamura Y."/>
            <person name="Ohara O."/>
            <person name="Isogai T."/>
            <person name="Sugano S."/>
        </authorList>
    </citation>
    <scope>NUCLEOTIDE SEQUENCE [LARGE SCALE MRNA] (ISOFORM 2)</scope>
    <source>
        <tissue>Thalamus</tissue>
    </source>
</reference>
<reference key="3">
    <citation type="journal article" date="2004" name="Nature">
        <title>The DNA sequence and comparative analysis of human chromosome 5.</title>
        <authorList>
            <person name="Schmutz J."/>
            <person name="Martin J."/>
            <person name="Terry A."/>
            <person name="Couronne O."/>
            <person name="Grimwood J."/>
            <person name="Lowry S."/>
            <person name="Gordon L.A."/>
            <person name="Scott D."/>
            <person name="Xie G."/>
            <person name="Huang W."/>
            <person name="Hellsten U."/>
            <person name="Tran-Gyamfi M."/>
            <person name="She X."/>
            <person name="Prabhakar S."/>
            <person name="Aerts A."/>
            <person name="Altherr M."/>
            <person name="Bajorek E."/>
            <person name="Black S."/>
            <person name="Branscomb E."/>
            <person name="Caoile C."/>
            <person name="Challacombe J.F."/>
            <person name="Chan Y.M."/>
            <person name="Denys M."/>
            <person name="Detter J.C."/>
            <person name="Escobar J."/>
            <person name="Flowers D."/>
            <person name="Fotopulos D."/>
            <person name="Glavina T."/>
            <person name="Gomez M."/>
            <person name="Gonzales E."/>
            <person name="Goodstein D."/>
            <person name="Grigoriev I."/>
            <person name="Groza M."/>
            <person name="Hammon N."/>
            <person name="Hawkins T."/>
            <person name="Haydu L."/>
            <person name="Israni S."/>
            <person name="Jett J."/>
            <person name="Kadner K."/>
            <person name="Kimball H."/>
            <person name="Kobayashi A."/>
            <person name="Lopez F."/>
            <person name="Lou Y."/>
            <person name="Martinez D."/>
            <person name="Medina C."/>
            <person name="Morgan J."/>
            <person name="Nandkeshwar R."/>
            <person name="Noonan J.P."/>
            <person name="Pitluck S."/>
            <person name="Pollard M."/>
            <person name="Predki P."/>
            <person name="Priest J."/>
            <person name="Ramirez L."/>
            <person name="Retterer J."/>
            <person name="Rodriguez A."/>
            <person name="Rogers S."/>
            <person name="Salamov A."/>
            <person name="Salazar A."/>
            <person name="Thayer N."/>
            <person name="Tice H."/>
            <person name="Tsai M."/>
            <person name="Ustaszewska A."/>
            <person name="Vo N."/>
            <person name="Wheeler J."/>
            <person name="Wu K."/>
            <person name="Yang J."/>
            <person name="Dickson M."/>
            <person name="Cheng J.-F."/>
            <person name="Eichler E.E."/>
            <person name="Olsen A."/>
            <person name="Pennacchio L.A."/>
            <person name="Rokhsar D.S."/>
            <person name="Richardson P."/>
            <person name="Lucas S.M."/>
            <person name="Myers R.M."/>
            <person name="Rubin E.M."/>
        </authorList>
    </citation>
    <scope>NUCLEOTIDE SEQUENCE [LARGE SCALE GENOMIC DNA]</scope>
</reference>
<reference key="4">
    <citation type="journal article" date="2007" name="BMC Genomics">
        <title>The full-ORF clone resource of the German cDNA consortium.</title>
        <authorList>
            <person name="Bechtel S."/>
            <person name="Rosenfelder H."/>
            <person name="Duda A."/>
            <person name="Schmidt C.P."/>
            <person name="Ernst U."/>
            <person name="Wellenreuther R."/>
            <person name="Mehrle A."/>
            <person name="Schuster C."/>
            <person name="Bahr A."/>
            <person name="Bloecker H."/>
            <person name="Heubner D."/>
            <person name="Hoerlein A."/>
            <person name="Michel G."/>
            <person name="Wedler H."/>
            <person name="Koehrer K."/>
            <person name="Ottenwaelder B."/>
            <person name="Poustka A."/>
            <person name="Wiemann S."/>
            <person name="Schupp I."/>
        </authorList>
    </citation>
    <scope>NUCLEOTIDE SEQUENCE [LARGE SCALE MRNA] OF 36-1113 (ISOFORM 2)</scope>
    <source>
        <tissue>Fetal brain</tissue>
    </source>
</reference>
<reference key="5">
    <citation type="journal article" date="1998" name="DNA Res.">
        <title>Prediction of the coding sequences of unidentified human genes. XII. The complete sequences of 100 new cDNA clones from brain which code for large proteins in vitro.</title>
        <authorList>
            <person name="Nagase T."/>
            <person name="Ishikawa K."/>
            <person name="Suyama M."/>
            <person name="Kikuno R."/>
            <person name="Hirosawa M."/>
            <person name="Miyajima N."/>
            <person name="Tanaka A."/>
            <person name="Kotani H."/>
            <person name="Nomura N."/>
            <person name="Ohara O."/>
        </authorList>
    </citation>
    <scope>NUCLEOTIDE SEQUENCE [LARGE SCALE MRNA] OF 225-1113 (ISOFORM 2)</scope>
    <source>
        <tissue>Brain</tissue>
    </source>
</reference>
<reference key="6">
    <citation type="submission" date="2002-07" db="EMBL/GenBank/DDBJ databases">
        <title>Screening and cloning of interaction protein 3 of HBeAg.</title>
        <authorList>
            <person name="Lu Y."/>
            <person name="Liu Y."/>
            <person name="Cheng J."/>
        </authorList>
    </citation>
    <scope>NUCLEOTIDE SEQUENCE [MRNA] OF 202-1113 (ISOFORM 1)</scope>
    <source>
        <tissue>Liver</tissue>
    </source>
</reference>
<reference key="7">
    <citation type="journal article" date="2004" name="Genome Res.">
        <title>The status, quality, and expansion of the NIH full-length cDNA project: the Mammalian Gene Collection (MGC).</title>
        <authorList>
            <consortium name="The MGC Project Team"/>
        </authorList>
    </citation>
    <scope>NUCLEOTIDE SEQUENCE [LARGE SCALE MRNA] OF 782-1113 (ISOFORM 1)</scope>
    <source>
        <tissue>Liver</tissue>
        <tissue>Placenta</tissue>
    </source>
</reference>
<reference key="8">
    <citation type="journal article" date="2004" name="Biochem. Biophys. Res. Commun.">
        <title>KIBRA is a novel substrate for protein kinase Czeta.</title>
        <authorList>
            <person name="Buether K."/>
            <person name="Plaas C."/>
            <person name="Barnekow A."/>
            <person name="Kremerskothen J."/>
        </authorList>
    </citation>
    <scope>SUBUNIT</scope>
    <scope>INTERACTION WITH PRKCZ</scope>
    <scope>PHOSPHORYLATION AT SER-975 AND SER-978</scope>
</reference>
<reference key="9">
    <citation type="journal article" date="2006" name="J. Biol. Chem.">
        <title>Essential role of KIBRA in co-activator function of dynein light chain 1 in mammalian cells.</title>
        <authorList>
            <person name="Rayala S.K."/>
            <person name="den Hollander P."/>
            <person name="Manavathi B."/>
            <person name="Talukder A.H."/>
            <person name="Song C."/>
            <person name="Peng S."/>
            <person name="Barnekow A."/>
            <person name="Kremerskothen J."/>
            <person name="Kumar R."/>
        </authorList>
    </citation>
    <scope>FUNCTION</scope>
    <scope>SUBCELLULAR LOCATION</scope>
    <scope>PHOSPHORYLATION</scope>
    <scope>INTERACTION WITH DYNLL1 AND HISTONE H3</scope>
</reference>
<reference key="10">
    <citation type="journal article" date="2006" name="Science">
        <title>Common Kibra alleles are associated with human memory performance.</title>
        <authorList>
            <person name="Papassotiropoulos A."/>
            <person name="Stephan D.A."/>
            <person name="Huentelman M.J."/>
            <person name="Hoerndli F.J."/>
            <person name="Craig D.W."/>
            <person name="Pearson J.V."/>
            <person name="Huynh K.D."/>
            <person name="Brunner F."/>
            <person name="Corneveaux J."/>
            <person name="Osborne D."/>
            <person name="Wollmer M.A."/>
            <person name="Aerni A."/>
            <person name="Coluccia D."/>
            <person name="Hanggi J."/>
            <person name="Mondadori C.R."/>
            <person name="Buchmann A."/>
            <person name="Reiman E.M."/>
            <person name="Caselli R.J."/>
            <person name="Henke K."/>
            <person name="de Quervain D.J."/>
        </authorList>
    </citation>
    <scope>POLYMORPHISM</scope>
    <scope>INVOLVEMENT IN MEMRYQTL</scope>
</reference>
<reference key="11">
    <citation type="journal article" date="2007" name="Nat. Cell Biol.">
        <title>SNX4 coordinates endosomal sorting of TfnR with dynein-mediated transport into the endocytic recycling compartment.</title>
        <authorList>
            <person name="Traer C.J."/>
            <person name="Rutherford A.C."/>
            <person name="Palmer K.J."/>
            <person name="Wassmer T."/>
            <person name="Oakley J."/>
            <person name="Attar N."/>
            <person name="Carlton J.G."/>
            <person name="Kremerskothen J."/>
            <person name="Stephens D.J."/>
            <person name="Cullen P.J."/>
        </authorList>
    </citation>
    <scope>INTERACTION WITH SNX4</scope>
</reference>
<reference key="12">
    <citation type="journal article" date="2008" name="J. Am. Soc. Nephrol.">
        <title>KIBRA modulates directional migration of podocytes.</title>
        <authorList>
            <person name="Duning K."/>
            <person name="Schurek E.M."/>
            <person name="Schlueter M."/>
            <person name="Bayer M."/>
            <person name="Reinhardt H.C."/>
            <person name="Schwab A."/>
            <person name="Schaefer L."/>
            <person name="Benzing T."/>
            <person name="Schermer B."/>
            <person name="Saleem M.A."/>
            <person name="Huber T.B."/>
            <person name="Bachmann S."/>
            <person name="Kremerskothen J."/>
            <person name="Weide T."/>
            <person name="Pavenstaedt H."/>
        </authorList>
    </citation>
    <scope>FUNCTION</scope>
    <scope>SUBCELLULAR LOCATION</scope>
    <scope>INTERACTION WITH SYNPO AND PATJ</scope>
    <scope>TISSUE SPECIFICITY</scope>
</reference>
<reference key="13">
    <citation type="journal article" date="2008" name="Biochim. Biophys. Acta">
        <title>KIBRA interacts with discoidin domain receptor 1 to modulate collagen-induced signalling.</title>
        <authorList>
            <person name="Hilton H.N."/>
            <person name="Stanford P.M."/>
            <person name="Harris J."/>
            <person name="Oakes S.R."/>
            <person name="Kaplan W."/>
            <person name="Daly R.J."/>
            <person name="Ormandy C.J."/>
        </authorList>
    </citation>
    <scope>FUNCTION</scope>
    <scope>SUBCELLULAR LOCATION</scope>
    <scope>PHOSPHORYLATION</scope>
    <scope>INDUCTION</scope>
    <scope>INTERACTION WITH DDR1 AND PRKCZ</scope>
    <scope>TISSUE SPECIFICITY</scope>
</reference>
<reference key="14">
    <citation type="journal article" date="2008" name="Neuroscience">
        <title>Temporal-spatial expression and novel biochemical properties of the memory-related protein KIBRA.</title>
        <authorList>
            <person name="Johannsen S."/>
            <person name="Duning K."/>
            <person name="Pavenstaedt H."/>
            <person name="Kremerskothen J."/>
            <person name="Boeckers T.M."/>
        </authorList>
    </citation>
    <scope>FUNCTION</scope>
    <scope>SUBUNIT</scope>
    <scope>TISSUE SPECIFICITY</scope>
    <scope>DOMAIN C2</scope>
</reference>
<reference key="15">
    <citation type="journal article" date="2008" name="Proc. Natl. Acad. Sci. U.S.A.">
        <title>A quantitative atlas of mitotic phosphorylation.</title>
        <authorList>
            <person name="Dephoure N."/>
            <person name="Zhou C."/>
            <person name="Villen J."/>
            <person name="Beausoleil S.A."/>
            <person name="Bakalarski C.E."/>
            <person name="Elledge S.J."/>
            <person name="Gygi S.P."/>
        </authorList>
    </citation>
    <scope>PHOSPHORYLATION [LARGE SCALE ANALYSIS] AT THR-912; THR-929 AND SER-931</scope>
    <scope>IDENTIFICATION BY MASS SPECTROMETRY [LARGE SCALE ANALYSIS]</scope>
    <source>
        <tissue>Cervix carcinoma</tissue>
    </source>
</reference>
<reference key="16">
    <citation type="journal article" date="2010" name="Dev. Cell">
        <title>Kibra functions as a tumor suppressor protein that regulates Hippo signaling in conjunction with Merlin and Expanded.</title>
        <authorList>
            <person name="Yu J."/>
            <person name="Zheng Y."/>
            <person name="Dong J."/>
            <person name="Klusza S."/>
            <person name="Deng W.-M."/>
            <person name="Pan D."/>
        </authorList>
    </citation>
    <scope>FUNCTION</scope>
</reference>
<reference key="17">
    <citation type="journal article" date="2010" name="Dev. Cell">
        <title>Kibra Is a regulator of the Salvador/Warts/Hippo signaling network.</title>
        <authorList>
            <person name="Genevet A."/>
            <person name="Wehr M.C."/>
            <person name="Brain R."/>
            <person name="Thompson B.J."/>
            <person name="Tapon N."/>
        </authorList>
    </citation>
    <scope>INTERACTION WITH NF2</scope>
</reference>
<reference key="18">
    <citation type="journal article" date="2010" name="Sci. Signal.">
        <title>Quantitative phosphoproteomics reveals widespread full phosphorylation site occupancy during mitosis.</title>
        <authorList>
            <person name="Olsen J.V."/>
            <person name="Vermeulen M."/>
            <person name="Santamaria A."/>
            <person name="Kumar C."/>
            <person name="Miller M.L."/>
            <person name="Jensen L.J."/>
            <person name="Gnad F."/>
            <person name="Cox J."/>
            <person name="Jensen T.S."/>
            <person name="Nigg E.A."/>
            <person name="Brunak S."/>
            <person name="Mann M."/>
        </authorList>
    </citation>
    <scope>PHOSPHORYLATION [LARGE SCALE ANALYSIS] AT SER-947</scope>
    <scope>IDENTIFICATION BY MASS SPECTROMETRY [LARGE SCALE ANALYSIS]</scope>
    <source>
        <tissue>Cervix carcinoma</tissue>
    </source>
</reference>
<reference key="19">
    <citation type="journal article" date="2012" name="Am. J. Med. Genet. B Neuropsychiatr. Genet.">
        <title>Association of KIBRA with episodic and working memory: a meta-analysis.</title>
        <authorList>
            <person name="Milnik A."/>
            <person name="Heck A."/>
            <person name="Vogler C."/>
            <person name="Heinze H.J."/>
            <person name="de Quervain D.J."/>
            <person name="Papassotiropoulos A."/>
        </authorList>
    </citation>
    <scope>POLYMORPHISM</scope>
    <scope>INVOLVEMENT IN MEMRYQTL</scope>
</reference>
<reference key="20">
    <citation type="journal article" date="2012" name="Biochem. J.">
        <title>Phospho-regulation of KIBRA by CDK1 and CDC14 phosphatase controls cell-cycle progression.</title>
        <authorList>
            <person name="Ji M."/>
            <person name="Yang S."/>
            <person name="Chen Y."/>
            <person name="Xiao L."/>
            <person name="Zhang L."/>
            <person name="Dong J."/>
        </authorList>
    </citation>
    <scope>PHOSPHORYLATION AT SER-542 AND SER-931 BY CDK1</scope>
    <scope>DEPHOSPHORYLATION BY CDC14B</scope>
</reference>
<reference key="21">
    <citation type="journal article" date="2013" name="J. Proteome Res.">
        <title>Toward a comprehensive characterization of a human cancer cell phosphoproteome.</title>
        <authorList>
            <person name="Zhou H."/>
            <person name="Di Palma S."/>
            <person name="Preisinger C."/>
            <person name="Peng M."/>
            <person name="Polat A.N."/>
            <person name="Heck A.J."/>
            <person name="Mohammed S."/>
        </authorList>
    </citation>
    <scope>PHOSPHORYLATION [LARGE SCALE ANALYSIS] AT SER-535 AND THR-929</scope>
    <scope>IDENTIFICATION BY MASS SPECTROMETRY [LARGE SCALE ANALYSIS]</scope>
    <source>
        <tissue>Cervix carcinoma</tissue>
    </source>
</reference>
<reference key="22">
    <citation type="journal article" date="2013" name="Transl. Psychiatry">
        <title>Common exonic missense variants in the C2 domain of the human KIBRA protein modify lipid binding and cognitive performance.</title>
        <authorList>
            <person name="Duning K."/>
            <person name="Wennmann D.O."/>
            <person name="Bokemeyer A."/>
            <person name="Reissner C."/>
            <person name="Wersching H."/>
            <person name="Thomas C."/>
            <person name="Buschert J."/>
            <person name="Guske K."/>
            <person name="Franzke V."/>
            <person name="Floel A."/>
            <person name="Lohmann H."/>
            <person name="Knecht S."/>
            <person name="Brand S.M."/>
            <person name="Poter M."/>
            <person name="Rescher U."/>
            <person name="Missler M."/>
            <person name="Seelheim P."/>
            <person name="Propper C."/>
            <person name="Boeckers T.M."/>
            <person name="Makuch L."/>
            <person name="Huganir R."/>
            <person name="Weide T."/>
            <person name="Brand E."/>
            <person name="Pavenstadt H."/>
            <person name="Kremerskothen J."/>
        </authorList>
    </citation>
    <scope>FUNCTION OF C2 DOMAIN</scope>
    <scope>VARIANTS ILE-734 AND ALA-735</scope>
    <scope>CHARACTERIZATION OF VARIANTS ILE-734 AND ALA-735</scope>
</reference>
<reference key="23">
    <citation type="journal article" date="2014" name="J. Proteomics">
        <title>An enzyme assisted RP-RPLC approach for in-depth analysis of human liver phosphoproteome.</title>
        <authorList>
            <person name="Bian Y."/>
            <person name="Song C."/>
            <person name="Cheng K."/>
            <person name="Dong M."/>
            <person name="Wang F."/>
            <person name="Huang J."/>
            <person name="Sun D."/>
            <person name="Wang L."/>
            <person name="Ye M."/>
            <person name="Zou H."/>
        </authorList>
    </citation>
    <scope>PHOSPHORYLATION [LARGE SCALE ANALYSIS] AT SER-899</scope>
    <scope>IDENTIFICATION BY MASS SPECTROMETRY [LARGE SCALE ANALYSIS]</scope>
    <source>
        <tissue>Liver</tissue>
    </source>
</reference>
<reference key="24">
    <citation type="journal article" date="2014" name="Mol. Biol. Evol.">
        <title>Evolutionary and Molecular Facts Link the WWC Protein Family to Hippo Signaling.</title>
        <authorList>
            <person name="Wennmann D.O."/>
            <person name="Schmitz J."/>
            <person name="Wehr M.C."/>
            <person name="Krahn M.P."/>
            <person name="Koschmal N."/>
            <person name="Gromnitza S."/>
            <person name="Schulze U."/>
            <person name="Weide T."/>
            <person name="Chekuri A."/>
            <person name="Skryabin B.V."/>
            <person name="Gerke V."/>
            <person name="Pavenstadt H."/>
            <person name="Duning K."/>
            <person name="Kremerskothen J."/>
        </authorList>
    </citation>
    <scope>FUNCTION</scope>
    <scope>SUBUNIT</scope>
    <scope>SUBCELLULAR LOCATION</scope>
    <scope>INTERACTION WITH DLC1; PRKCZ; LATS1 AND LATS2</scope>
</reference>
<reference key="25">
    <citation type="submission" date="2009-02" db="PDB data bank">
        <title>Crystal structure of C2 domain of KIBRA protein.</title>
        <authorList>
            <consortium name="RIKEN structural genomics initiative (RSGI)"/>
        </authorList>
    </citation>
    <scope>X-RAY CRYSTALLOGRAPHY (2.2 ANGSTROMS) OF 638-785</scope>
</reference>
<accession>Q8IX03</accession>
<accession>B4DK05</accession>
<accession>O94946</accession>
<accession>Q6MZX4</accession>
<accession>Q6Y2F8</accession>
<accession>Q7Z4G8</accession>
<accession>Q8WVM4</accession>
<accession>Q9BT29</accession>
<keyword id="KW-0002">3D-structure</keyword>
<keyword id="KW-0010">Activator</keyword>
<keyword id="KW-0025">Alternative splicing</keyword>
<keyword id="KW-1003">Cell membrane</keyword>
<keyword id="KW-0966">Cell projection</keyword>
<keyword id="KW-0175">Coiled coil</keyword>
<keyword id="KW-0963">Cytoplasm</keyword>
<keyword id="KW-0472">Membrane</keyword>
<keyword id="KW-0539">Nucleus</keyword>
<keyword id="KW-0597">Phosphoprotein</keyword>
<keyword id="KW-1267">Proteomics identification</keyword>
<keyword id="KW-1185">Reference proteome</keyword>
<keyword id="KW-0677">Repeat</keyword>
<keyword id="KW-0678">Repressor</keyword>
<keyword id="KW-0804">Transcription</keyword>
<keyword id="KW-0805">Transcription regulation</keyword>
<evidence type="ECO:0000250" key="1">
    <source>
        <dbReference type="UniProtKB" id="Q5SXA9"/>
    </source>
</evidence>
<evidence type="ECO:0000255" key="2"/>
<evidence type="ECO:0000255" key="3">
    <source>
        <dbReference type="PROSITE-ProRule" id="PRU00041"/>
    </source>
</evidence>
<evidence type="ECO:0000255" key="4">
    <source>
        <dbReference type="PROSITE-ProRule" id="PRU00224"/>
    </source>
</evidence>
<evidence type="ECO:0000256" key="5">
    <source>
        <dbReference type="SAM" id="MobiDB-lite"/>
    </source>
</evidence>
<evidence type="ECO:0000269" key="6">
    <source>
    </source>
</evidence>
<evidence type="ECO:0000269" key="7">
    <source>
    </source>
</evidence>
<evidence type="ECO:0000269" key="8">
    <source>
    </source>
</evidence>
<evidence type="ECO:0000269" key="9">
    <source>
    </source>
</evidence>
<evidence type="ECO:0000269" key="10">
    <source>
    </source>
</evidence>
<evidence type="ECO:0000269" key="11">
    <source>
    </source>
</evidence>
<evidence type="ECO:0000269" key="12">
    <source>
    </source>
</evidence>
<evidence type="ECO:0000269" key="13">
    <source>
    </source>
</evidence>
<evidence type="ECO:0000269" key="14">
    <source>
    </source>
</evidence>
<evidence type="ECO:0000269" key="15">
    <source>
    </source>
</evidence>
<evidence type="ECO:0000269" key="16">
    <source>
    </source>
</evidence>
<evidence type="ECO:0000269" key="17">
    <source>
    </source>
</evidence>
<evidence type="ECO:0000269" key="18">
    <source>
    </source>
</evidence>
<evidence type="ECO:0000269" key="19">
    <source>
    </source>
</evidence>
<evidence type="ECO:0000303" key="20">
    <source>
    </source>
</evidence>
<evidence type="ECO:0000303" key="21">
    <source>
    </source>
</evidence>
<evidence type="ECO:0000303" key="22">
    <source>
    </source>
</evidence>
<evidence type="ECO:0000305" key="23"/>
<evidence type="ECO:0000312" key="24">
    <source>
        <dbReference type="HGNC" id="HGNC:29435"/>
    </source>
</evidence>
<evidence type="ECO:0007744" key="25">
    <source>
    </source>
</evidence>
<evidence type="ECO:0007744" key="26">
    <source>
    </source>
</evidence>
<evidence type="ECO:0007744" key="27">
    <source>
    </source>
</evidence>
<evidence type="ECO:0007744" key="28">
    <source>
    </source>
</evidence>
<evidence type="ECO:0007829" key="29">
    <source>
        <dbReference type="PDB" id="2Z0U"/>
    </source>
</evidence>
<evidence type="ECO:0007829" key="30">
    <source>
        <dbReference type="PDB" id="6FB4"/>
    </source>
</evidence>
<evidence type="ECO:0007829" key="31">
    <source>
        <dbReference type="PDB" id="6FD0"/>
    </source>
</evidence>
<dbReference type="EMBL" id="AF506799">
    <property type="protein sequence ID" value="AAO15881.1"/>
    <property type="molecule type" value="mRNA"/>
</dbReference>
<dbReference type="EMBL" id="AK296323">
    <property type="protein sequence ID" value="BAG59017.1"/>
    <property type="molecule type" value="mRNA"/>
</dbReference>
<dbReference type="EMBL" id="AC020894">
    <property type="status" value="NOT_ANNOTATED_CDS"/>
    <property type="molecule type" value="Genomic_DNA"/>
</dbReference>
<dbReference type="EMBL" id="AC026689">
    <property type="status" value="NOT_ANNOTATED_CDS"/>
    <property type="molecule type" value="Genomic_DNA"/>
</dbReference>
<dbReference type="EMBL" id="BX640827">
    <property type="protein sequence ID" value="CAE45903.1"/>
    <property type="molecule type" value="mRNA"/>
</dbReference>
<dbReference type="EMBL" id="AB020676">
    <property type="protein sequence ID" value="BAA74892.1"/>
    <property type="molecule type" value="mRNA"/>
</dbReference>
<dbReference type="EMBL" id="AF530058">
    <property type="protein sequence ID" value="AAQ09942.1"/>
    <property type="molecule type" value="mRNA"/>
</dbReference>
<dbReference type="EMBL" id="AY189820">
    <property type="protein sequence ID" value="AAO73817.1"/>
    <property type="molecule type" value="mRNA"/>
</dbReference>
<dbReference type="EMBL" id="BC004394">
    <property type="protein sequence ID" value="AAH04394.1"/>
    <property type="molecule type" value="mRNA"/>
</dbReference>
<dbReference type="EMBL" id="BC017746">
    <property type="protein sequence ID" value="AAH17746.1"/>
    <property type="molecule type" value="mRNA"/>
</dbReference>
<dbReference type="CCDS" id="CCDS4366.1">
    <molecule id="Q8IX03-1"/>
</dbReference>
<dbReference type="CCDS" id="CCDS54945.1">
    <molecule id="Q8IX03-2"/>
</dbReference>
<dbReference type="RefSeq" id="NP_001155133.1">
    <molecule id="Q8IX03-2"/>
    <property type="nucleotide sequence ID" value="NM_001161661.2"/>
</dbReference>
<dbReference type="RefSeq" id="NP_001155134.1">
    <property type="nucleotide sequence ID" value="NM_001161662.1"/>
</dbReference>
<dbReference type="RefSeq" id="NP_056053.1">
    <molecule id="Q8IX03-1"/>
    <property type="nucleotide sequence ID" value="NM_015238.3"/>
</dbReference>
<dbReference type="PDB" id="2Z0U">
    <property type="method" value="X-ray"/>
    <property type="resolution" value="2.20 A"/>
    <property type="chains" value="A/B=638-785"/>
</dbReference>
<dbReference type="PDB" id="6FB4">
    <property type="method" value="X-ray"/>
    <property type="resolution" value="2.42 A"/>
    <property type="chains" value="A/B=658-785"/>
</dbReference>
<dbReference type="PDB" id="6FD0">
    <property type="method" value="X-ray"/>
    <property type="resolution" value="2.64 A"/>
    <property type="chains" value="A/B=658-785"/>
</dbReference>
<dbReference type="PDB" id="6FJC">
    <property type="method" value="X-ray"/>
    <property type="resolution" value="2.60 A"/>
    <property type="chains" value="A/B=658-785"/>
</dbReference>
<dbReference type="PDB" id="6FJD">
    <property type="method" value="X-ray"/>
    <property type="resolution" value="2.90 A"/>
    <property type="chains" value="A/B=658-785"/>
</dbReference>
<dbReference type="PDBsum" id="2Z0U"/>
<dbReference type="PDBsum" id="6FB4"/>
<dbReference type="PDBsum" id="6FD0"/>
<dbReference type="PDBsum" id="6FJC"/>
<dbReference type="PDBsum" id="6FJD"/>
<dbReference type="SMR" id="Q8IX03"/>
<dbReference type="BioGRID" id="116884">
    <property type="interactions" value="99"/>
</dbReference>
<dbReference type="CORUM" id="Q8IX03"/>
<dbReference type="DIP" id="DIP-35287N"/>
<dbReference type="FunCoup" id="Q8IX03">
    <property type="interactions" value="1318"/>
</dbReference>
<dbReference type="IntAct" id="Q8IX03">
    <property type="interactions" value="76"/>
</dbReference>
<dbReference type="MINT" id="Q8IX03"/>
<dbReference type="STRING" id="9606.ENSP00000427772"/>
<dbReference type="CarbonylDB" id="Q8IX03"/>
<dbReference type="GlyGen" id="Q8IX03">
    <property type="glycosylation" value="2 sites, 1 O-linked glycan (1 site)"/>
</dbReference>
<dbReference type="iPTMnet" id="Q8IX03"/>
<dbReference type="PhosphoSitePlus" id="Q8IX03"/>
<dbReference type="BioMuta" id="WWC1"/>
<dbReference type="DMDM" id="74714457"/>
<dbReference type="jPOST" id="Q8IX03"/>
<dbReference type="MassIVE" id="Q8IX03"/>
<dbReference type="PaxDb" id="9606-ENSP00000427772"/>
<dbReference type="PeptideAtlas" id="Q8IX03"/>
<dbReference type="ProteomicsDB" id="70950">
    <molecule id="Q8IX03-1"/>
</dbReference>
<dbReference type="ProteomicsDB" id="70951">
    <molecule id="Q8IX03-2"/>
</dbReference>
<dbReference type="Pumba" id="Q8IX03"/>
<dbReference type="Antibodypedia" id="48675">
    <property type="antibodies" value="219 antibodies from 26 providers"/>
</dbReference>
<dbReference type="DNASU" id="23286"/>
<dbReference type="Ensembl" id="ENST00000265293.9">
    <molecule id="Q8IX03-1"/>
    <property type="protein sequence ID" value="ENSP00000265293.4"/>
    <property type="gene ID" value="ENSG00000113645.15"/>
</dbReference>
<dbReference type="Ensembl" id="ENST00000521089.5">
    <molecule id="Q8IX03-2"/>
    <property type="protein sequence ID" value="ENSP00000427772.1"/>
    <property type="gene ID" value="ENSG00000113645.15"/>
</dbReference>
<dbReference type="GeneID" id="23286"/>
<dbReference type="KEGG" id="hsa:23286"/>
<dbReference type="MANE-Select" id="ENST00000265293.9">
    <property type="protein sequence ID" value="ENSP00000265293.4"/>
    <property type="RefSeq nucleotide sequence ID" value="NM_015238.3"/>
    <property type="RefSeq protein sequence ID" value="NP_056053.1"/>
</dbReference>
<dbReference type="UCSC" id="uc003lzu.4">
    <molecule id="Q8IX03-1"/>
    <property type="organism name" value="human"/>
</dbReference>
<dbReference type="AGR" id="HGNC:29435"/>
<dbReference type="CTD" id="23286"/>
<dbReference type="DisGeNET" id="23286"/>
<dbReference type="GeneCards" id="WWC1"/>
<dbReference type="HGNC" id="HGNC:29435">
    <property type="gene designation" value="WWC1"/>
</dbReference>
<dbReference type="HPA" id="ENSG00000113645">
    <property type="expression patterns" value="Tissue enhanced (salivary)"/>
</dbReference>
<dbReference type="MalaCards" id="WWC1"/>
<dbReference type="MIM" id="610533">
    <property type="type" value="gene"/>
</dbReference>
<dbReference type="MIM" id="615602">
    <property type="type" value="phenotype"/>
</dbReference>
<dbReference type="neXtProt" id="NX_Q8IX03"/>
<dbReference type="OpenTargets" id="ENSG00000113645"/>
<dbReference type="PharmGKB" id="PA143485670"/>
<dbReference type="VEuPathDB" id="HostDB:ENSG00000113645"/>
<dbReference type="eggNOG" id="KOG3209">
    <property type="taxonomic scope" value="Eukaryota"/>
</dbReference>
<dbReference type="GeneTree" id="ENSGT00410000025556"/>
<dbReference type="HOGENOM" id="CLU_005420_0_0_1"/>
<dbReference type="InParanoid" id="Q8IX03"/>
<dbReference type="OMA" id="QVTVVSM"/>
<dbReference type="OrthoDB" id="2020426at2759"/>
<dbReference type="PAN-GO" id="Q8IX03">
    <property type="GO annotations" value="7 GO annotations based on evolutionary models"/>
</dbReference>
<dbReference type="PhylomeDB" id="Q8IX03"/>
<dbReference type="TreeFam" id="TF324040"/>
<dbReference type="PathwayCommons" id="Q8IX03"/>
<dbReference type="Reactome" id="R-HSA-2028269">
    <property type="pathway name" value="Signaling by Hippo"/>
</dbReference>
<dbReference type="Reactome" id="R-HSA-9013508">
    <property type="pathway name" value="NOTCH3 Intracellular Domain Regulates Transcription"/>
</dbReference>
<dbReference type="SignaLink" id="Q8IX03"/>
<dbReference type="SIGNOR" id="Q8IX03"/>
<dbReference type="BioGRID-ORCS" id="23286">
    <property type="hits" value="13 hits in 1139 CRISPR screens"/>
</dbReference>
<dbReference type="ChiTaRS" id="WWC1">
    <property type="organism name" value="human"/>
</dbReference>
<dbReference type="EvolutionaryTrace" id="Q8IX03"/>
<dbReference type="GeneWiki" id="WWC1"/>
<dbReference type="GenomeRNAi" id="23286"/>
<dbReference type="Pharos" id="Q8IX03">
    <property type="development level" value="Tbio"/>
</dbReference>
<dbReference type="PRO" id="PR:Q8IX03"/>
<dbReference type="Proteomes" id="UP000005640">
    <property type="component" value="Chromosome 5"/>
</dbReference>
<dbReference type="RNAct" id="Q8IX03">
    <property type="molecule type" value="protein"/>
</dbReference>
<dbReference type="Bgee" id="ENSG00000113645">
    <property type="expression patterns" value="Expressed in ventricular zone and 180 other cell types or tissues"/>
</dbReference>
<dbReference type="ExpressionAtlas" id="Q8IX03">
    <property type="expression patterns" value="baseline and differential"/>
</dbReference>
<dbReference type="GO" id="GO:0005737">
    <property type="term" value="C:cytoplasm"/>
    <property type="evidence" value="ECO:0000314"/>
    <property type="project" value="UniProtKB"/>
</dbReference>
<dbReference type="GO" id="GO:0005829">
    <property type="term" value="C:cytosol"/>
    <property type="evidence" value="ECO:0000314"/>
    <property type="project" value="BHF-UCL"/>
</dbReference>
<dbReference type="GO" id="GO:0005634">
    <property type="term" value="C:nucleus"/>
    <property type="evidence" value="ECO:0000314"/>
    <property type="project" value="UniProtKB"/>
</dbReference>
<dbReference type="GO" id="GO:0048471">
    <property type="term" value="C:perinuclear region of cytoplasm"/>
    <property type="evidence" value="ECO:0000314"/>
    <property type="project" value="UniProtKB"/>
</dbReference>
<dbReference type="GO" id="GO:0032587">
    <property type="term" value="C:ruffle membrane"/>
    <property type="evidence" value="ECO:0000314"/>
    <property type="project" value="UniProtKB"/>
</dbReference>
<dbReference type="GO" id="GO:0019900">
    <property type="term" value="F:kinase binding"/>
    <property type="evidence" value="ECO:0000353"/>
    <property type="project" value="BHF-UCL"/>
</dbReference>
<dbReference type="GO" id="GO:0060090">
    <property type="term" value="F:molecular adaptor activity"/>
    <property type="evidence" value="ECO:0000314"/>
    <property type="project" value="BHF-UCL"/>
</dbReference>
<dbReference type="GO" id="GO:0035591">
    <property type="term" value="F:signaling adaptor activity"/>
    <property type="evidence" value="ECO:0000314"/>
    <property type="project" value="UniProt"/>
</dbReference>
<dbReference type="GO" id="GO:0003713">
    <property type="term" value="F:transcription coactivator activity"/>
    <property type="evidence" value="ECO:0000314"/>
    <property type="project" value="UniProtKB"/>
</dbReference>
<dbReference type="GO" id="GO:0016477">
    <property type="term" value="P:cell migration"/>
    <property type="evidence" value="ECO:0000314"/>
    <property type="project" value="UniProtKB"/>
</dbReference>
<dbReference type="GO" id="GO:0030010">
    <property type="term" value="P:establishment of cell polarity"/>
    <property type="evidence" value="ECO:0000304"/>
    <property type="project" value="BHF-UCL"/>
</dbReference>
<dbReference type="GO" id="GO:0035329">
    <property type="term" value="P:hippo signaling"/>
    <property type="evidence" value="ECO:0000314"/>
    <property type="project" value="UniProt"/>
</dbReference>
<dbReference type="GO" id="GO:0008285">
    <property type="term" value="P:negative regulation of cell population proliferation"/>
    <property type="evidence" value="ECO:0000315"/>
    <property type="project" value="UniProtKB"/>
</dbReference>
<dbReference type="GO" id="GO:0035331">
    <property type="term" value="P:negative regulation of hippo signaling"/>
    <property type="evidence" value="ECO:0000314"/>
    <property type="project" value="BHF-UCL"/>
</dbReference>
<dbReference type="GO" id="GO:0046621">
    <property type="term" value="P:negative regulation of organ growth"/>
    <property type="evidence" value="ECO:0000315"/>
    <property type="project" value="BHF-UCL"/>
</dbReference>
<dbReference type="GO" id="GO:0000122">
    <property type="term" value="P:negative regulation of transcription by RNA polymerase II"/>
    <property type="evidence" value="ECO:0000314"/>
    <property type="project" value="BHF-UCL"/>
</dbReference>
<dbReference type="GO" id="GO:0043410">
    <property type="term" value="P:positive regulation of MAPK cascade"/>
    <property type="evidence" value="ECO:0000314"/>
    <property type="project" value="UniProtKB"/>
</dbReference>
<dbReference type="GO" id="GO:0006355">
    <property type="term" value="P:regulation of DNA-templated transcription"/>
    <property type="evidence" value="ECO:0000318"/>
    <property type="project" value="GO_Central"/>
</dbReference>
<dbReference type="GO" id="GO:0035330">
    <property type="term" value="P:regulation of hippo signaling"/>
    <property type="evidence" value="ECO:0000315"/>
    <property type="project" value="UniProtKB"/>
</dbReference>
<dbReference type="GO" id="GO:0032386">
    <property type="term" value="P:regulation of intracellular transport"/>
    <property type="evidence" value="ECO:0000304"/>
    <property type="project" value="BHF-UCL"/>
</dbReference>
<dbReference type="CDD" id="cd08680">
    <property type="entry name" value="C2_Kibra"/>
    <property type="match status" value="1"/>
</dbReference>
<dbReference type="CDD" id="cd00201">
    <property type="entry name" value="WW"/>
    <property type="match status" value="2"/>
</dbReference>
<dbReference type="FunFam" id="2.20.70.10:FF:000001">
    <property type="entry name" value="Membrane-associated guanylate kinase, WW and PDZ domain-containing protein 1"/>
    <property type="match status" value="1"/>
</dbReference>
<dbReference type="FunFam" id="2.60.40.150:FF:000084">
    <property type="entry name" value="Protein KIBRA isoform 1"/>
    <property type="match status" value="1"/>
</dbReference>
<dbReference type="FunFam" id="2.20.70.10:FF:000041">
    <property type="entry name" value="WW and C2 domain containing 1"/>
    <property type="match status" value="1"/>
</dbReference>
<dbReference type="Gene3D" id="2.20.70.10">
    <property type="match status" value="2"/>
</dbReference>
<dbReference type="Gene3D" id="2.60.40.150">
    <property type="entry name" value="C2 domain"/>
    <property type="match status" value="1"/>
</dbReference>
<dbReference type="InterPro" id="IPR000008">
    <property type="entry name" value="C2_dom"/>
</dbReference>
<dbReference type="InterPro" id="IPR035892">
    <property type="entry name" value="C2_domain_sf"/>
</dbReference>
<dbReference type="InterPro" id="IPR037771">
    <property type="entry name" value="C2_WWC"/>
</dbReference>
<dbReference type="InterPro" id="IPR001202">
    <property type="entry name" value="WW_dom"/>
</dbReference>
<dbReference type="InterPro" id="IPR036020">
    <property type="entry name" value="WW_dom_sf"/>
</dbReference>
<dbReference type="InterPro" id="IPR051105">
    <property type="entry name" value="WWC/KIBRA_Hippo_Reg"/>
</dbReference>
<dbReference type="PANTHER" id="PTHR14791">
    <property type="entry name" value="BOMB/KIRA PROTEINS"/>
    <property type="match status" value="1"/>
</dbReference>
<dbReference type="PANTHER" id="PTHR14791:SF22">
    <property type="entry name" value="PROTEIN KIBRA"/>
    <property type="match status" value="1"/>
</dbReference>
<dbReference type="Pfam" id="PF00168">
    <property type="entry name" value="C2"/>
    <property type="match status" value="1"/>
</dbReference>
<dbReference type="Pfam" id="PF00397">
    <property type="entry name" value="WW"/>
    <property type="match status" value="2"/>
</dbReference>
<dbReference type="SMART" id="SM00456">
    <property type="entry name" value="WW"/>
    <property type="match status" value="2"/>
</dbReference>
<dbReference type="SUPFAM" id="SSF49562">
    <property type="entry name" value="C2 domain (Calcium/lipid-binding domain, CaLB)"/>
    <property type="match status" value="1"/>
</dbReference>
<dbReference type="SUPFAM" id="SSF51045">
    <property type="entry name" value="WW domain"/>
    <property type="match status" value="2"/>
</dbReference>
<dbReference type="PROSITE" id="PS50004">
    <property type="entry name" value="C2"/>
    <property type="match status" value="1"/>
</dbReference>
<dbReference type="PROSITE" id="PS01159">
    <property type="entry name" value="WW_DOMAIN_1"/>
    <property type="match status" value="1"/>
</dbReference>
<dbReference type="PROSITE" id="PS50020">
    <property type="entry name" value="WW_DOMAIN_2"/>
    <property type="match status" value="2"/>
</dbReference>
<name>KIBRA_HUMAN</name>
<gene>
    <name evidence="24" type="primary">WWC1</name>
    <name type="synonym">KIAA0869</name>
    <name type="synonym">KIBRA</name>
</gene>
<sequence>MPRPELPLPEGWEEARDFDGKVYYIDHTNRTTSWIDPRDRYTKPLTFADCISDELPLGWEEAYDPQVGDYFIDHNTKTTQIEDPRVQWRREQEHMLKDYLVVAQEALSAQKEIYQVKQQRLELAQQEYQQLHAVWEHKLGSQVSLVSGSSSSSKYDPEILKAEIATAKSRVNKLKREMVHLQHELQFKERGFQTLKKIDKKMSDAQGSYKLDEAQAVLRETKAIKKAITCGEKEKQDLIKSLAMLKDGFRTDRGSHSDLWSSSSSLESSSFPLPKQYLDVSSQTDISGSFGINSNNQLAEKVRLRLRYEEAKRRIANLKIQLAKLDSEAWPGVLDSERDRLILINEKEELLKEMRFISPRKWTQGEVEQLEMARKRLEKDLQAARDTQSKALTERLKLNSKRNQLVRELEEATRQVATLHSQLKSLSSSMQSLSSGSSPGSLTSSRGSLVASSLDSSTSASFTDLYYDPFEQLDSELQSKVEFLLLEGATGFRPSGCITTIHEDEVAKTQKAEGGGRLQALRSLSGTPKSMTSLSPRSSLSSPSPPCSPLMADPLLAGDAFLNSLEFEDPELSATLCELSLGNSAQERYRLEEPGTEGKQLGQAVNTAQGCGLKVACVSAAVSDESVAGDSGVYEASVQRLGASEAAAFDSDESEAVGATRIQIALKYDEKNKQFAILIIQLSNLSALLQQQDQKVNIRVAVLPCSESTTCLFRTRPLDASDTLVFNEVFWVSMSYPALHQKTLRVDVCTTDRSHLEECLGGAQISLAEVCRSGERSTRWYNLLSYKYLKKQSRELKPVGVMAPASGPASTDAVSALLEQTAVELEKRQEGRSSTQTLEDSWRYEETSENEAVAEEEEEEVEEEEGEEDVFTEKASPDMDGYPALKVDKETNTETPAPSPTVVRPKDRRVGTPSQGPFLRGSTIIRSKTFSPGPQSQYVCRLNRSDSDSSTLSKKPPFVRNSLERRSVRMKRPSSVKSLRSERLIRTSLDLELDLQATRTWHSQLTQEISVLKELKEQLEQAKSHGEKELPQWLREDERFRLLLRMLEKRQMDRAEHKGELQTDKMMRAAAKDVHRLRGQSCKEPPEVQSFREKMAFFTRPRMNIPALSADDV</sequence>
<feature type="chain" id="PRO_0000242153" description="Protein KIBRA">
    <location>
        <begin position="1"/>
        <end position="1113"/>
    </location>
</feature>
<feature type="domain" description="WW 1" evidence="4">
    <location>
        <begin position="6"/>
        <end position="39"/>
    </location>
</feature>
<feature type="domain" description="WW 2" evidence="4">
    <location>
        <begin position="53"/>
        <end position="86"/>
    </location>
</feature>
<feature type="domain" description="C2" evidence="3">
    <location>
        <begin position="658"/>
        <end position="781"/>
    </location>
</feature>
<feature type="region of interest" description="Disordered" evidence="5">
    <location>
        <begin position="429"/>
        <end position="448"/>
    </location>
</feature>
<feature type="region of interest" description="Disordered" evidence="5">
    <location>
        <begin position="522"/>
        <end position="547"/>
    </location>
</feature>
<feature type="region of interest" description="Disordered" evidence="5">
    <location>
        <begin position="825"/>
        <end position="975"/>
    </location>
</feature>
<feature type="region of interest" description="Interaction with histone H3">
    <location>
        <begin position="839"/>
        <end position="1113"/>
    </location>
</feature>
<feature type="region of interest" description="Interaction with PRKCZ">
    <location>
        <begin position="953"/>
        <end position="996"/>
    </location>
</feature>
<feature type="region of interest" description="Interaction with PRKCZ" evidence="19">
    <location>
        <begin position="956"/>
        <end position="975"/>
    </location>
</feature>
<feature type="coiled-coil region" evidence="2">
    <location>
        <begin position="107"/>
        <end position="193"/>
    </location>
</feature>
<feature type="coiled-coil region" evidence="2">
    <location>
        <begin position="293"/>
        <end position="431"/>
    </location>
</feature>
<feature type="coiled-coil region" evidence="2">
    <location>
        <begin position="1001"/>
        <end position="1032"/>
    </location>
</feature>
<feature type="short sequence motif" description="ADDV motif">
    <location>
        <begin position="1111"/>
        <end position="1113"/>
    </location>
</feature>
<feature type="compositionally biased region" description="Polar residues" evidence="5">
    <location>
        <begin position="522"/>
        <end position="532"/>
    </location>
</feature>
<feature type="compositionally biased region" description="Low complexity" evidence="5">
    <location>
        <begin position="533"/>
        <end position="542"/>
    </location>
</feature>
<feature type="compositionally biased region" description="Acidic residues" evidence="5">
    <location>
        <begin position="847"/>
        <end position="870"/>
    </location>
</feature>
<feature type="compositionally biased region" description="Polar residues" evidence="5">
    <location>
        <begin position="924"/>
        <end position="938"/>
    </location>
</feature>
<feature type="modified residue" description="Phosphoserine" evidence="1">
    <location>
        <position position="141"/>
    </location>
</feature>
<feature type="modified residue" description="Phosphoserine" evidence="27">
    <location>
        <position position="535"/>
    </location>
</feature>
<feature type="modified residue" description="Phosphoserine; by CDK1" evidence="16">
    <location>
        <position position="542"/>
    </location>
</feature>
<feature type="modified residue" description="Phosphoserine" evidence="28">
    <location>
        <position position="899"/>
    </location>
</feature>
<feature type="modified residue" description="Phosphothreonine" evidence="25">
    <location>
        <position position="912"/>
    </location>
</feature>
<feature type="modified residue" description="Phosphoserine" evidence="1">
    <location>
        <position position="927"/>
    </location>
</feature>
<feature type="modified residue" description="Phosphothreonine" evidence="25 27">
    <location>
        <position position="929"/>
    </location>
</feature>
<feature type="modified residue" description="Phosphoserine; by CDK1" evidence="16 25">
    <location>
        <position position="931"/>
    </location>
</feature>
<feature type="modified residue" description="Phosphoserine" evidence="26">
    <location>
        <position position="947"/>
    </location>
</feature>
<feature type="modified residue" description="Phosphoserine; by PKC/PRKCZ" evidence="7">
    <location>
        <position position="975"/>
    </location>
</feature>
<feature type="modified residue" description="Phosphoserine; by PKC/PRKCZ" evidence="7">
    <location>
        <position position="978"/>
    </location>
</feature>
<feature type="splice variant" id="VSP_019448" description="In isoform 2." evidence="20 21 22">
    <original>S</original>
    <variation>SPPPQPS</variation>
    <location>
        <position position="974"/>
    </location>
</feature>
<feature type="sequence variant" id="VAR_026844" description="In dbSNP:rs17551608.">
    <original>R</original>
    <variation>C</variation>
    <location>
        <position position="250"/>
    </location>
</feature>
<feature type="sequence variant" id="VAR_053449" description="Associated with Ala-735; affects KIBRA lipid-binding specificity showing stronger interactions with PI(4)P and PI(5)P; dbSNP:rs3822660." evidence="18">
    <original>M</original>
    <variation>I</variation>
    <location>
        <position position="734"/>
    </location>
</feature>
<feature type="sequence variant" id="VAR_053450" description="Associated with Ile-734; affects KIBRA lipid-binding specificity showing stronger interactions with PI(4)P and PI(5)P; dbSNP:rs3822659." evidence="18">
    <original>S</original>
    <variation>A</variation>
    <location>
        <position position="735"/>
    </location>
</feature>
<feature type="sequence conflict" description="In Ref. 4; CAE45903." evidence="23" ref="4">
    <original>F</original>
    <variation>L</variation>
    <location>
        <position position="561"/>
    </location>
</feature>
<feature type="sequence conflict" description="In Ref. 4; CAE45903." evidence="23" ref="4">
    <original>C</original>
    <variation>R</variation>
    <location>
        <position position="759"/>
    </location>
</feature>
<feature type="sequence conflict" description="In Ref. 6; AAO73817." evidence="23" ref="6">
    <original>T</original>
    <variation>TVSWDQ</variation>
    <location>
        <position position="811"/>
    </location>
</feature>
<feature type="sequence conflict" description="In Ref. 4; CAE45903." evidence="23" ref="4">
    <original>S</original>
    <variation>N</variation>
    <location>
        <position position="834"/>
    </location>
</feature>
<feature type="sequence conflict" description="In Ref. 6; AAO73817." evidence="23" ref="6">
    <location>
        <position position="865"/>
    </location>
</feature>
<feature type="sequence conflict" description="In Ref. 4; CAE45903 and 5; BAA74892." evidence="23" ref="4 5">
    <location>
        <position position="1051"/>
    </location>
</feature>
<feature type="sequence conflict" description="In Ref. 6; AAO73817." evidence="23" ref="6">
    <original>DK</original>
    <variation>AR</variation>
    <location>
        <begin position="1064"/>
        <end position="1065"/>
    </location>
</feature>
<feature type="strand" evidence="29">
    <location>
        <begin position="660"/>
        <end position="669"/>
    </location>
</feature>
<feature type="turn" evidence="29">
    <location>
        <begin position="670"/>
        <end position="673"/>
    </location>
</feature>
<feature type="strand" evidence="29">
    <location>
        <begin position="674"/>
        <end position="683"/>
    </location>
</feature>
<feature type="helix" evidence="29">
    <location>
        <begin position="685"/>
        <end position="687"/>
    </location>
</feature>
<feature type="strand" evidence="30">
    <location>
        <begin position="691"/>
        <end position="693"/>
    </location>
</feature>
<feature type="strand" evidence="29">
    <location>
        <begin position="694"/>
        <end position="704"/>
    </location>
</feature>
<feature type="helix" evidence="29">
    <location>
        <begin position="708"/>
        <end position="711"/>
    </location>
</feature>
<feature type="strand" evidence="29">
    <location>
        <begin position="712"/>
        <end position="714"/>
    </location>
</feature>
<feature type="strand" evidence="29">
    <location>
        <begin position="722"/>
        <end position="733"/>
    </location>
</feature>
<feature type="helix" evidence="29">
    <location>
        <begin position="736"/>
        <end position="741"/>
    </location>
</feature>
<feature type="strand" evidence="29">
    <location>
        <begin position="743"/>
        <end position="751"/>
    </location>
</feature>
<feature type="turn" evidence="31">
    <location>
        <begin position="753"/>
        <end position="755"/>
    </location>
</feature>
<feature type="strand" evidence="29">
    <location>
        <begin position="757"/>
        <end position="766"/>
    </location>
</feature>
<feature type="strand" evidence="30">
    <location>
        <begin position="772"/>
        <end position="775"/>
    </location>
</feature>
<feature type="strand" evidence="29">
    <location>
        <begin position="777"/>
        <end position="784"/>
    </location>
</feature>
<protein>
    <recommendedName>
        <fullName>Protein KIBRA</fullName>
    </recommendedName>
    <alternativeName>
        <fullName>HBeAg-binding protein 3</fullName>
    </alternativeName>
    <alternativeName>
        <fullName>Kidney and brain protein</fullName>
        <shortName>KIBRA</shortName>
    </alternativeName>
    <alternativeName>
        <fullName>WW domain-containing protein 1</fullName>
    </alternativeName>
</protein>
<comment type="function">
    <text evidence="1 8 11 12 13 14 19">Regulator of the Hippo signaling pathway, also known as the Salvador-Warts-Hippo (SWH) pathway (PubMed:24682284). Enhances phosphorylation of LATS1 and YAP1 and negatively regulates cell proliferation and organ growth due to a suppression of the transcriptional activity of YAP1, the major effector of the Hippo pathway (PubMed:24682284). Along with NF2 can synergistically induce the phosphorylation of LATS1 and LATS2 and function in the regulation of Hippo signaling pathway (PubMed:20159598). Acts as a transcriptional coactivator of ESR1 which plays an essential role in DYNLL1-mediated ESR1 transactivation (PubMed:16684779). Regulates collagen-stimulated activation of the ERK/MAPK cascade (PubMed:18190796). Modulates directional migration of podocytes (PubMed:18596123). Plays a role in cognition and memory performance (PubMed:18672031). Plays an important role in regulating AMPA-selective glutamate receptors (AMPARs) trafficking underlying synaptic plasticity and learning (By similarity).</text>
</comment>
<comment type="subunit">
    <text evidence="6 7 8 10 11 12 13 15 19">Homodimer (PubMed:15081397, PubMed:18672031). Forms heterodimers with WWC2 and WWC3 (PubMed:24682284). Interacts with DDN. Interacts with DYNLL1 and histone H3. The interaction with DYNLL1 is mandatory for the recruitment and transactivation functions of ESR1 or DYNLL1 to the target chromatin and the interaction with histone H3 ensures proper regulatory interaction of WWC1-DYNLL1-ESR1 complexes with target chromatin. Interacts (via WW domains) with DDR1 (via PPxY motif) in a collagen-regulated manner. Interacts with PRKCZ (via the protein kinase domain). Forms a tripartite complex with DDR1 and PRKCZ, but predominantly in the absence of collagen. Interacts (via the ADDV motif) with PATJ (via PDZ domain 8). Interacts (via WW domains) with SYNPO (via PPxY motifs). Interacts with NF2 and SNX4. Interacts with DLC1 and PRKCZ (PubMed:24682284). Interacts (via WW domains) with LATS1 and LATS2 (PubMed:24682284).</text>
</comment>
<comment type="interaction">
    <interactant intactId="EBI-15812469">
        <id>Q8IX03-1</id>
    </interactant>
    <interactant intactId="EBI-6959516">
        <id>Q62824</id>
        <label>Exoc4</label>
    </interactant>
    <organismsDiffer>true</organismsDiffer>
    <experiments>3</experiments>
</comment>
<comment type="subcellular location">
    <subcellularLocation>
        <location evidence="12">Cytoplasm</location>
        <location evidence="12">Perinuclear region</location>
    </subcellularLocation>
    <subcellularLocation>
        <location evidence="8 11">Nucleus</location>
    </subcellularLocation>
    <subcellularLocation>
        <location evidence="11">Cell projection</location>
        <location evidence="11">Ruffle membrane</location>
    </subcellularLocation>
    <subcellularLocation>
        <location evidence="8 11 19">Cytoplasm</location>
        <location evidence="8 11 19">Cytosol</location>
    </subcellularLocation>
    <text>Colocalizes with PRKCZ in the perinuclear region.</text>
</comment>
<comment type="alternative products">
    <event type="alternative splicing"/>
    <isoform>
        <id>Q8IX03-1</id>
        <name>1</name>
        <sequence type="displayed"/>
    </isoform>
    <isoform>
        <id>Q8IX03-2</id>
        <name>2</name>
        <sequence type="described" ref="VSP_019448"/>
    </isoform>
</comment>
<comment type="tissue specificity">
    <text evidence="6 11 12 13">Expressed in mammary epithelial cells and breast cancer cell lines. Found in the luminal epithelium surrounding the ducts in the normal breast. In the brain, expressed in somatodendritic compartment of neurons in the cortex and hippocampus and in the cerebellum it is found in the Purkinje cells and some granule cells (at protein level). Detected in brain, heart, colon and kidney. In the kidney, expressed in glomerular podocytes, in some tubules and in the collecting duct.</text>
</comment>
<comment type="induction">
    <text evidence="11">Strongly up-regulated by progestin treatment.</text>
</comment>
<comment type="domain">
    <text evidence="13">The C2-domain mediates homodimerization. It is a calcium-sensitive lipid-binding domain with preference for PI(3)P.</text>
</comment>
<comment type="PTM">
    <text evidence="7 8 11 16">Phosphorylation at Ser-542 and Ser-931 by CDK1 in response to spindle damage stress regulates mitotic exit, these two sites are dephosphorylated by CDC14B.</text>
</comment>
<comment type="polymorphism">
    <text evidence="9 17">Genetic variations in WWC1 define the memory quantitative trait locus (MEMRYQTL) [MIM:615602].</text>
</comment>
<comment type="similarity">
    <text evidence="23">Belongs to the WWC family. KIBRA subfamily.</text>
</comment>